<organism>
    <name type="scientific">Listeria monocytogenes serotype 4b (strain CLIP80459)</name>
    <dbReference type="NCBI Taxonomy" id="568819"/>
    <lineage>
        <taxon>Bacteria</taxon>
        <taxon>Bacillati</taxon>
        <taxon>Bacillota</taxon>
        <taxon>Bacilli</taxon>
        <taxon>Bacillales</taxon>
        <taxon>Listeriaceae</taxon>
        <taxon>Listeria</taxon>
    </lineage>
</organism>
<name>DNLJ_LISMC</name>
<evidence type="ECO:0000255" key="1">
    <source>
        <dbReference type="HAMAP-Rule" id="MF_01588"/>
    </source>
</evidence>
<keyword id="KW-0227">DNA damage</keyword>
<keyword id="KW-0234">DNA repair</keyword>
<keyword id="KW-0235">DNA replication</keyword>
<keyword id="KW-0436">Ligase</keyword>
<keyword id="KW-0460">Magnesium</keyword>
<keyword id="KW-0464">Manganese</keyword>
<keyword id="KW-0479">Metal-binding</keyword>
<keyword id="KW-0520">NAD</keyword>
<keyword id="KW-0862">Zinc</keyword>
<comment type="function">
    <text evidence="1">DNA ligase that catalyzes the formation of phosphodiester linkages between 5'-phosphoryl and 3'-hydroxyl groups in double-stranded DNA using NAD as a coenzyme and as the energy source for the reaction. It is essential for DNA replication and repair of damaged DNA.</text>
</comment>
<comment type="catalytic activity">
    <reaction evidence="1">
        <text>NAD(+) + (deoxyribonucleotide)n-3'-hydroxyl + 5'-phospho-(deoxyribonucleotide)m = (deoxyribonucleotide)n+m + AMP + beta-nicotinamide D-nucleotide.</text>
        <dbReference type="EC" id="6.5.1.2"/>
    </reaction>
</comment>
<comment type="cofactor">
    <cofactor evidence="1">
        <name>Mg(2+)</name>
        <dbReference type="ChEBI" id="CHEBI:18420"/>
    </cofactor>
    <cofactor evidence="1">
        <name>Mn(2+)</name>
        <dbReference type="ChEBI" id="CHEBI:29035"/>
    </cofactor>
</comment>
<comment type="similarity">
    <text evidence="1">Belongs to the NAD-dependent DNA ligase family. LigA subfamily.</text>
</comment>
<sequence length="671" mass="74797">MADKKRYEELINILDQYSYDYYVIDNPTVEDAEYDQKMQELLKIEEAHPEWVTPESPSKRVGGEVLEGFKKVAHDTPMLSLANAFNQEDLADFDRRIRDKVGDDIAYMCELKIDGLAVSLQYENGKYKQGATRGDGTIGEDITANLRTIRSIPMKLQKDYSIEVRGEAFMPKRSFQKLNEIREEEGQMLFANPRNAAAGSLRQLDTKIAASRNLDIFLYAVADFGEMGVETHSAGLDMLETLGLKVNKERRLCNSLEEVYAYIEEWTEKRAGLAYDIDGIVLKLNNLEQQRQMGNTVKSPRWSIAYKFPAEEVPTKLLDIELNVGRTGVITPTAVLEPVRVAGTTVSRASLHNEDLITEKDIRIGDTVLIKKAGDIIPEVIKSITEKRSGSEEPFHMPKNCPACDSELVRLEEEVALRCINPKCPAQIKEGLIHFVSRNAMNIDGLGEKVIIQLFSQHLIKDVADLFFLSKEKLLELERMGEKSVTNLLASIEASKQNSLEKLLFGLGIRHVGAKAAKSLAIHFDTMDNLKVADKETLTSINDIGEKMADSIVTYFANEEVHDLLEELKRAGVNMTYTGPKLEDMSEEELVFAGKTVVLTGKLEKLTRNDAKALIESLGGNVSGSVSKKTDVVVAGSDAGSKLAKAEELAIPIWSEEDLIEYLPDEGGLNE</sequence>
<dbReference type="EC" id="6.5.1.2" evidence="1"/>
<dbReference type="EMBL" id="FM242711">
    <property type="protein sequence ID" value="CAS05532.1"/>
    <property type="molecule type" value="Genomic_DNA"/>
</dbReference>
<dbReference type="RefSeq" id="WP_012681339.1">
    <property type="nucleotide sequence ID" value="NC_012488.1"/>
</dbReference>
<dbReference type="SMR" id="C1KW57"/>
<dbReference type="KEGG" id="lmc:Lm4b_01772"/>
<dbReference type="HOGENOM" id="CLU_007764_2_1_9"/>
<dbReference type="GO" id="GO:0005829">
    <property type="term" value="C:cytosol"/>
    <property type="evidence" value="ECO:0007669"/>
    <property type="project" value="TreeGrafter"/>
</dbReference>
<dbReference type="GO" id="GO:0003677">
    <property type="term" value="F:DNA binding"/>
    <property type="evidence" value="ECO:0007669"/>
    <property type="project" value="InterPro"/>
</dbReference>
<dbReference type="GO" id="GO:0003911">
    <property type="term" value="F:DNA ligase (NAD+) activity"/>
    <property type="evidence" value="ECO:0007669"/>
    <property type="project" value="UniProtKB-UniRule"/>
</dbReference>
<dbReference type="GO" id="GO:0046872">
    <property type="term" value="F:metal ion binding"/>
    <property type="evidence" value="ECO:0007669"/>
    <property type="project" value="UniProtKB-KW"/>
</dbReference>
<dbReference type="GO" id="GO:0006281">
    <property type="term" value="P:DNA repair"/>
    <property type="evidence" value="ECO:0007669"/>
    <property type="project" value="UniProtKB-KW"/>
</dbReference>
<dbReference type="GO" id="GO:0006260">
    <property type="term" value="P:DNA replication"/>
    <property type="evidence" value="ECO:0007669"/>
    <property type="project" value="UniProtKB-KW"/>
</dbReference>
<dbReference type="CDD" id="cd17748">
    <property type="entry name" value="BRCT_DNA_ligase_like"/>
    <property type="match status" value="1"/>
</dbReference>
<dbReference type="CDD" id="cd00114">
    <property type="entry name" value="LIGANc"/>
    <property type="match status" value="1"/>
</dbReference>
<dbReference type="FunFam" id="1.10.150.20:FF:000006">
    <property type="entry name" value="DNA ligase"/>
    <property type="match status" value="1"/>
</dbReference>
<dbReference type="FunFam" id="1.10.150.20:FF:000007">
    <property type="entry name" value="DNA ligase"/>
    <property type="match status" value="1"/>
</dbReference>
<dbReference type="FunFam" id="1.10.287.610:FF:000002">
    <property type="entry name" value="DNA ligase"/>
    <property type="match status" value="1"/>
</dbReference>
<dbReference type="FunFam" id="2.40.50.140:FF:000012">
    <property type="entry name" value="DNA ligase"/>
    <property type="match status" value="1"/>
</dbReference>
<dbReference type="FunFam" id="3.30.470.30:FF:000001">
    <property type="entry name" value="DNA ligase"/>
    <property type="match status" value="1"/>
</dbReference>
<dbReference type="FunFam" id="3.40.50.10190:FF:000026">
    <property type="entry name" value="DNA ligase"/>
    <property type="match status" value="1"/>
</dbReference>
<dbReference type="FunFam" id="6.20.10.30:FF:000002">
    <property type="entry name" value="DNA ligase"/>
    <property type="match status" value="1"/>
</dbReference>
<dbReference type="Gene3D" id="6.20.10.30">
    <property type="match status" value="1"/>
</dbReference>
<dbReference type="Gene3D" id="1.10.150.20">
    <property type="entry name" value="5' to 3' exonuclease, C-terminal subdomain"/>
    <property type="match status" value="2"/>
</dbReference>
<dbReference type="Gene3D" id="3.40.50.10190">
    <property type="entry name" value="BRCT domain"/>
    <property type="match status" value="1"/>
</dbReference>
<dbReference type="Gene3D" id="3.30.470.30">
    <property type="entry name" value="DNA ligase/mRNA capping enzyme"/>
    <property type="match status" value="1"/>
</dbReference>
<dbReference type="Gene3D" id="1.10.287.610">
    <property type="entry name" value="Helix hairpin bin"/>
    <property type="match status" value="1"/>
</dbReference>
<dbReference type="Gene3D" id="2.40.50.140">
    <property type="entry name" value="Nucleic acid-binding proteins"/>
    <property type="match status" value="1"/>
</dbReference>
<dbReference type="HAMAP" id="MF_01588">
    <property type="entry name" value="DNA_ligase_A"/>
    <property type="match status" value="1"/>
</dbReference>
<dbReference type="InterPro" id="IPR001357">
    <property type="entry name" value="BRCT_dom"/>
</dbReference>
<dbReference type="InterPro" id="IPR036420">
    <property type="entry name" value="BRCT_dom_sf"/>
</dbReference>
<dbReference type="InterPro" id="IPR041663">
    <property type="entry name" value="DisA/LigA_HHH"/>
</dbReference>
<dbReference type="InterPro" id="IPR001679">
    <property type="entry name" value="DNA_ligase"/>
</dbReference>
<dbReference type="InterPro" id="IPR033136">
    <property type="entry name" value="DNA_ligase_CS"/>
</dbReference>
<dbReference type="InterPro" id="IPR013839">
    <property type="entry name" value="DNAligase_adenylation"/>
</dbReference>
<dbReference type="InterPro" id="IPR013840">
    <property type="entry name" value="DNAligase_N"/>
</dbReference>
<dbReference type="InterPro" id="IPR003583">
    <property type="entry name" value="Hlx-hairpin-Hlx_DNA-bd_motif"/>
</dbReference>
<dbReference type="InterPro" id="IPR012340">
    <property type="entry name" value="NA-bd_OB-fold"/>
</dbReference>
<dbReference type="InterPro" id="IPR004150">
    <property type="entry name" value="NAD_DNA_ligase_OB"/>
</dbReference>
<dbReference type="InterPro" id="IPR010994">
    <property type="entry name" value="RuvA_2-like"/>
</dbReference>
<dbReference type="InterPro" id="IPR004149">
    <property type="entry name" value="Znf_DNAligase_C4"/>
</dbReference>
<dbReference type="NCBIfam" id="TIGR00575">
    <property type="entry name" value="dnlj"/>
    <property type="match status" value="1"/>
</dbReference>
<dbReference type="NCBIfam" id="NF005932">
    <property type="entry name" value="PRK07956.1"/>
    <property type="match status" value="1"/>
</dbReference>
<dbReference type="PANTHER" id="PTHR23389">
    <property type="entry name" value="CHROMOSOME TRANSMISSION FIDELITY FACTOR 18"/>
    <property type="match status" value="1"/>
</dbReference>
<dbReference type="PANTHER" id="PTHR23389:SF9">
    <property type="entry name" value="DNA LIGASE"/>
    <property type="match status" value="1"/>
</dbReference>
<dbReference type="Pfam" id="PF00533">
    <property type="entry name" value="BRCT"/>
    <property type="match status" value="1"/>
</dbReference>
<dbReference type="Pfam" id="PF01653">
    <property type="entry name" value="DNA_ligase_aden"/>
    <property type="match status" value="1"/>
</dbReference>
<dbReference type="Pfam" id="PF03120">
    <property type="entry name" value="DNA_ligase_OB"/>
    <property type="match status" value="1"/>
</dbReference>
<dbReference type="Pfam" id="PF03119">
    <property type="entry name" value="DNA_ligase_ZBD"/>
    <property type="match status" value="1"/>
</dbReference>
<dbReference type="Pfam" id="PF12826">
    <property type="entry name" value="HHH_2"/>
    <property type="match status" value="1"/>
</dbReference>
<dbReference type="Pfam" id="PF14520">
    <property type="entry name" value="HHH_5"/>
    <property type="match status" value="1"/>
</dbReference>
<dbReference type="PIRSF" id="PIRSF001604">
    <property type="entry name" value="LigA"/>
    <property type="match status" value="1"/>
</dbReference>
<dbReference type="SMART" id="SM00292">
    <property type="entry name" value="BRCT"/>
    <property type="match status" value="1"/>
</dbReference>
<dbReference type="SMART" id="SM00278">
    <property type="entry name" value="HhH1"/>
    <property type="match status" value="3"/>
</dbReference>
<dbReference type="SMART" id="SM00532">
    <property type="entry name" value="LIGANc"/>
    <property type="match status" value="1"/>
</dbReference>
<dbReference type="SUPFAM" id="SSF52113">
    <property type="entry name" value="BRCT domain"/>
    <property type="match status" value="1"/>
</dbReference>
<dbReference type="SUPFAM" id="SSF56091">
    <property type="entry name" value="DNA ligase/mRNA capping enzyme, catalytic domain"/>
    <property type="match status" value="1"/>
</dbReference>
<dbReference type="SUPFAM" id="SSF50249">
    <property type="entry name" value="Nucleic acid-binding proteins"/>
    <property type="match status" value="1"/>
</dbReference>
<dbReference type="SUPFAM" id="SSF47781">
    <property type="entry name" value="RuvA domain 2-like"/>
    <property type="match status" value="1"/>
</dbReference>
<dbReference type="PROSITE" id="PS50172">
    <property type="entry name" value="BRCT"/>
    <property type="match status" value="1"/>
</dbReference>
<dbReference type="PROSITE" id="PS01056">
    <property type="entry name" value="DNA_LIGASE_N2"/>
    <property type="match status" value="1"/>
</dbReference>
<feature type="chain" id="PRO_0000380410" description="DNA ligase">
    <location>
        <begin position="1"/>
        <end position="671"/>
    </location>
</feature>
<feature type="domain" description="BRCT" evidence="1">
    <location>
        <begin position="587"/>
        <end position="671"/>
    </location>
</feature>
<feature type="active site" description="N6-AMP-lysine intermediate" evidence="1">
    <location>
        <position position="112"/>
    </location>
</feature>
<feature type="binding site" evidence="1">
    <location>
        <begin position="31"/>
        <end position="35"/>
    </location>
    <ligand>
        <name>NAD(+)</name>
        <dbReference type="ChEBI" id="CHEBI:57540"/>
    </ligand>
</feature>
<feature type="binding site" evidence="1">
    <location>
        <begin position="80"/>
        <end position="81"/>
    </location>
    <ligand>
        <name>NAD(+)</name>
        <dbReference type="ChEBI" id="CHEBI:57540"/>
    </ligand>
</feature>
<feature type="binding site" evidence="1">
    <location>
        <position position="110"/>
    </location>
    <ligand>
        <name>NAD(+)</name>
        <dbReference type="ChEBI" id="CHEBI:57540"/>
    </ligand>
</feature>
<feature type="binding site" evidence="1">
    <location>
        <position position="133"/>
    </location>
    <ligand>
        <name>NAD(+)</name>
        <dbReference type="ChEBI" id="CHEBI:57540"/>
    </ligand>
</feature>
<feature type="binding site" evidence="1">
    <location>
        <position position="167"/>
    </location>
    <ligand>
        <name>NAD(+)</name>
        <dbReference type="ChEBI" id="CHEBI:57540"/>
    </ligand>
</feature>
<feature type="binding site" evidence="1">
    <location>
        <position position="283"/>
    </location>
    <ligand>
        <name>NAD(+)</name>
        <dbReference type="ChEBI" id="CHEBI:57540"/>
    </ligand>
</feature>
<feature type="binding site" evidence="1">
    <location>
        <position position="307"/>
    </location>
    <ligand>
        <name>NAD(+)</name>
        <dbReference type="ChEBI" id="CHEBI:57540"/>
    </ligand>
</feature>
<feature type="binding site" evidence="1">
    <location>
        <position position="401"/>
    </location>
    <ligand>
        <name>Zn(2+)</name>
        <dbReference type="ChEBI" id="CHEBI:29105"/>
    </ligand>
</feature>
<feature type="binding site" evidence="1">
    <location>
        <position position="404"/>
    </location>
    <ligand>
        <name>Zn(2+)</name>
        <dbReference type="ChEBI" id="CHEBI:29105"/>
    </ligand>
</feature>
<feature type="binding site" evidence="1">
    <location>
        <position position="419"/>
    </location>
    <ligand>
        <name>Zn(2+)</name>
        <dbReference type="ChEBI" id="CHEBI:29105"/>
    </ligand>
</feature>
<feature type="binding site" evidence="1">
    <location>
        <position position="424"/>
    </location>
    <ligand>
        <name>Zn(2+)</name>
        <dbReference type="ChEBI" id="CHEBI:29105"/>
    </ligand>
</feature>
<protein>
    <recommendedName>
        <fullName evidence="1">DNA ligase</fullName>
        <ecNumber evidence="1">6.5.1.2</ecNumber>
    </recommendedName>
    <alternativeName>
        <fullName evidence="1">Polydeoxyribonucleotide synthase [NAD(+)]</fullName>
    </alternativeName>
</protein>
<gene>
    <name evidence="1" type="primary">ligA</name>
    <name type="ordered locus">Lm4b_01772</name>
</gene>
<accession>C1KW57</accession>
<reference key="1">
    <citation type="journal article" date="2012" name="BMC Genomics">
        <title>Comparative genomics and transcriptomics of lineages I, II, and III strains of Listeria monocytogenes.</title>
        <authorList>
            <person name="Hain T."/>
            <person name="Ghai R."/>
            <person name="Billion A."/>
            <person name="Kuenne C.T."/>
            <person name="Steinweg C."/>
            <person name="Izar B."/>
            <person name="Mohamed W."/>
            <person name="Mraheil M."/>
            <person name="Domann E."/>
            <person name="Schaffrath S."/>
            <person name="Karst U."/>
            <person name="Goesmann A."/>
            <person name="Oehm S."/>
            <person name="Puhler A."/>
            <person name="Merkl R."/>
            <person name="Vorwerk S."/>
            <person name="Glaser P."/>
            <person name="Garrido P."/>
            <person name="Rusniok C."/>
            <person name="Buchrieser C."/>
            <person name="Goebel W."/>
            <person name="Chakraborty T."/>
        </authorList>
    </citation>
    <scope>NUCLEOTIDE SEQUENCE [LARGE SCALE GENOMIC DNA]</scope>
    <source>
        <strain>CLIP80459</strain>
    </source>
</reference>
<proteinExistence type="inferred from homology"/>